<reference key="1">
    <citation type="journal article" date="2001" name="Nature">
        <title>Genome sequence of enterohaemorrhagic Escherichia coli O157:H7.</title>
        <authorList>
            <person name="Perna N.T."/>
            <person name="Plunkett G. III"/>
            <person name="Burland V."/>
            <person name="Mau B."/>
            <person name="Glasner J.D."/>
            <person name="Rose D.J."/>
            <person name="Mayhew G.F."/>
            <person name="Evans P.S."/>
            <person name="Gregor J."/>
            <person name="Kirkpatrick H.A."/>
            <person name="Posfai G."/>
            <person name="Hackett J."/>
            <person name="Klink S."/>
            <person name="Boutin A."/>
            <person name="Shao Y."/>
            <person name="Miller L."/>
            <person name="Grotbeck E.J."/>
            <person name="Davis N.W."/>
            <person name="Lim A."/>
            <person name="Dimalanta E.T."/>
            <person name="Potamousis K."/>
            <person name="Apodaca J."/>
            <person name="Anantharaman T.S."/>
            <person name="Lin J."/>
            <person name="Yen G."/>
            <person name="Schwartz D.C."/>
            <person name="Welch R.A."/>
            <person name="Blattner F.R."/>
        </authorList>
    </citation>
    <scope>NUCLEOTIDE SEQUENCE [LARGE SCALE GENOMIC DNA]</scope>
    <source>
        <strain>O157:H7 / EDL933 / ATCC 700927 / EHEC</strain>
    </source>
</reference>
<reference key="2">
    <citation type="journal article" date="2001" name="DNA Res.">
        <title>Complete genome sequence of enterohemorrhagic Escherichia coli O157:H7 and genomic comparison with a laboratory strain K-12.</title>
        <authorList>
            <person name="Hayashi T."/>
            <person name="Makino K."/>
            <person name="Ohnishi M."/>
            <person name="Kurokawa K."/>
            <person name="Ishii K."/>
            <person name="Yokoyama K."/>
            <person name="Han C.-G."/>
            <person name="Ohtsubo E."/>
            <person name="Nakayama K."/>
            <person name="Murata T."/>
            <person name="Tanaka M."/>
            <person name="Tobe T."/>
            <person name="Iida T."/>
            <person name="Takami H."/>
            <person name="Honda T."/>
            <person name="Sasakawa C."/>
            <person name="Ogasawara N."/>
            <person name="Yasunaga T."/>
            <person name="Kuhara S."/>
            <person name="Shiba T."/>
            <person name="Hattori M."/>
            <person name="Shinagawa H."/>
        </authorList>
    </citation>
    <scope>NUCLEOTIDE SEQUENCE [LARGE SCALE GENOMIC DNA]</scope>
    <source>
        <strain>O157:H7 / Sakai / RIMD 0509952 / EHEC</strain>
    </source>
</reference>
<gene>
    <name type="primary">manZ</name>
    <name type="ordered locus">Z2862</name>
    <name type="ordered locus">ECs2529</name>
</gene>
<keyword id="KW-0997">Cell inner membrane</keyword>
<keyword id="KW-1003">Cell membrane</keyword>
<keyword id="KW-0291">Formylation</keyword>
<keyword id="KW-0472">Membrane</keyword>
<keyword id="KW-0598">Phosphotransferase system</keyword>
<keyword id="KW-1185">Reference proteome</keyword>
<keyword id="KW-0762">Sugar transport</keyword>
<keyword id="KW-0812">Transmembrane</keyword>
<keyword id="KW-1133">Transmembrane helix</keyword>
<keyword id="KW-0813">Transport</keyword>
<feature type="chain" id="PRO_0000186652" description="PTS system mannose-specific EIID component">
    <location>
        <begin position="1"/>
        <end position="283"/>
    </location>
</feature>
<feature type="topological domain" description="Cytoplasmic" evidence="1">
    <location>
        <begin position="1"/>
        <end position="14"/>
    </location>
</feature>
<feature type="intramembrane region" evidence="1">
    <location>
        <begin position="15"/>
        <end position="52"/>
    </location>
</feature>
<feature type="topological domain" description="Cytoplasmic" evidence="1">
    <location>
        <begin position="53"/>
        <end position="59"/>
    </location>
</feature>
<feature type="intramembrane region" evidence="1">
    <location>
        <begin position="60"/>
        <end position="92"/>
    </location>
</feature>
<feature type="topological domain" description="Cytoplasmic" evidence="1">
    <location>
        <begin position="93"/>
        <end position="100"/>
    </location>
</feature>
<feature type="transmembrane region" evidence="1">
    <location>
        <begin position="101"/>
        <end position="140"/>
    </location>
</feature>
<feature type="topological domain" description="Periplasmic" evidence="1">
    <location>
        <begin position="141"/>
        <end position="144"/>
    </location>
</feature>
<feature type="transmembrane region" evidence="1">
    <location>
        <begin position="145"/>
        <end position="173"/>
    </location>
</feature>
<feature type="topological domain" description="Cytoplasmic" evidence="1">
    <location>
        <begin position="174"/>
        <end position="183"/>
    </location>
</feature>
<feature type="transmembrane region" evidence="1">
    <location>
        <begin position="184"/>
        <end position="209"/>
    </location>
</feature>
<feature type="topological domain" description="Periplasmic" evidence="1">
    <location>
        <begin position="210"/>
        <end position="241"/>
    </location>
</feature>
<feature type="transmembrane region" evidence="1">
    <location>
        <begin position="242"/>
        <end position="255"/>
    </location>
</feature>
<feature type="topological domain" description="Cytoplasmic" evidence="1">
    <location>
        <begin position="256"/>
        <end position="261"/>
    </location>
</feature>
<feature type="transmembrane region" evidence="1">
    <location>
        <begin position="262"/>
        <end position="280"/>
    </location>
</feature>
<feature type="topological domain" description="Periplasmic" evidence="1">
    <location>
        <begin position="281"/>
        <end position="283"/>
    </location>
</feature>
<feature type="domain" description="PTS EIID" evidence="1">
    <location>
        <begin position="11"/>
        <end position="281"/>
    </location>
</feature>
<feature type="modified residue" description="N-formylmethionine" evidence="1">
    <location>
        <position position="1"/>
    </location>
</feature>
<evidence type="ECO:0000250" key="1">
    <source>
        <dbReference type="UniProtKB" id="P69805"/>
    </source>
</evidence>
<evidence type="ECO:0000255" key="2">
    <source>
        <dbReference type="PROSITE-ProRule" id="PRU00431"/>
    </source>
</evidence>
<evidence type="ECO:0000305" key="3"/>
<proteinExistence type="inferred from homology"/>
<protein>
    <recommendedName>
        <fullName evidence="1">PTS system mannose-specific EIID component</fullName>
    </recommendedName>
    <alternativeName>
        <fullName evidence="1">EII-M-Man</fullName>
    </alternativeName>
    <alternativeName>
        <fullName evidence="1">EIID-Man</fullName>
    </alternativeName>
    <alternativeName>
        <fullName evidence="1">Mannose permease IID component</fullName>
    </alternativeName>
</protein>
<comment type="function">
    <text evidence="1">The phosphoenolpyruvate-dependent sugar phosphotransferase system (sugar PTS), a major carbohydrate active transport system, catalyzes the phosphorylation of incoming sugar substrates concomitantly with their translocation across the cell membrane. The enzyme II ManXYZ PTS system is involved in mannose transport.</text>
</comment>
<comment type="subunit">
    <text evidence="1">Homotrimer of protomers that are composed of two subunits, IIC and IID.</text>
</comment>
<comment type="subcellular location">
    <subcellularLocation>
        <location evidence="1">Cell inner membrane</location>
        <topology evidence="1">Multi-pass membrane protein</topology>
    </subcellularLocation>
</comment>
<comment type="domain">
    <text evidence="2">The EIID domain, with its homologous EIIC domain, forms the PTS system translocation channel and contains part of its specific substrate-binding site.</text>
</comment>
<comment type="sequence caution" evidence="3">
    <conflict type="erroneous initiation">
        <sequence resource="EMBL-CDS" id="AAG56808"/>
    </conflict>
    <text>Extended N-terminus.</text>
</comment>
<name>PTND_ECO57</name>
<accession>P69807</accession>
<accession>P08188</accession>
<sequence>MVDTTQTTTEKKLTQSDIRGVFLRSNLFQGSWNFERMQALGFCFSMVPAIRRLYPENNEARKQAIRRHLEFFNTQPFVAAPILGVTLALEEQRANGAEIDDGAINGIKVGLMGPLAGVGDPIFWGTVRPVFAALGAGIAMSGSLLGPLLFFILFNLVRLATRYYGVAYGYSKGIDIVKDMGGGFLQKLTEGASILGLFVMGALVNKWTHVNIPLVVSRITDQTGKEHVTTVQTILDQLMPGLVPLLLTFACMWLLRKKVNPLWIIVGFFVIGIAGYACGLLGL</sequence>
<dbReference type="EMBL" id="AE005174">
    <property type="protein sequence ID" value="AAG56808.1"/>
    <property type="status" value="ALT_INIT"/>
    <property type="molecule type" value="Genomic_DNA"/>
</dbReference>
<dbReference type="EMBL" id="BA000007">
    <property type="protein sequence ID" value="BAB35952.2"/>
    <property type="molecule type" value="Genomic_DNA"/>
</dbReference>
<dbReference type="PIR" id="A98945">
    <property type="entry name" value="A98945"/>
</dbReference>
<dbReference type="PIR" id="D85793">
    <property type="entry name" value="D85793"/>
</dbReference>
<dbReference type="RefSeq" id="NP_310556.4">
    <property type="nucleotide sequence ID" value="NC_002695.1"/>
</dbReference>
<dbReference type="RefSeq" id="WP_000228655.1">
    <property type="nucleotide sequence ID" value="NZ_VOAI01000010.1"/>
</dbReference>
<dbReference type="SMR" id="P69807"/>
<dbReference type="STRING" id="155864.Z2862"/>
<dbReference type="GeneID" id="914171"/>
<dbReference type="GeneID" id="93776068"/>
<dbReference type="KEGG" id="ece:Z2862"/>
<dbReference type="KEGG" id="ecs:ECs_2529"/>
<dbReference type="PATRIC" id="fig|386585.9.peg.2649"/>
<dbReference type="eggNOG" id="COG3716">
    <property type="taxonomic scope" value="Bacteria"/>
</dbReference>
<dbReference type="HOGENOM" id="CLU_060742_2_0_6"/>
<dbReference type="OMA" id="DPVFWYT"/>
<dbReference type="Proteomes" id="UP000000558">
    <property type="component" value="Chromosome"/>
</dbReference>
<dbReference type="Proteomes" id="UP000002519">
    <property type="component" value="Chromosome"/>
</dbReference>
<dbReference type="GO" id="GO:0005886">
    <property type="term" value="C:plasma membrane"/>
    <property type="evidence" value="ECO:0007669"/>
    <property type="project" value="UniProtKB-SubCell"/>
</dbReference>
<dbReference type="GO" id="GO:0009401">
    <property type="term" value="P:phosphoenolpyruvate-dependent sugar phosphotransferase system"/>
    <property type="evidence" value="ECO:0007669"/>
    <property type="project" value="UniProtKB-KW"/>
</dbReference>
<dbReference type="InterPro" id="IPR050303">
    <property type="entry name" value="GatZ_KbaZ_carbometab"/>
</dbReference>
<dbReference type="InterPro" id="IPR004704">
    <property type="entry name" value="PTS_IID_man"/>
</dbReference>
<dbReference type="NCBIfam" id="TIGR00828">
    <property type="entry name" value="EIID-AGA"/>
    <property type="match status" value="1"/>
</dbReference>
<dbReference type="NCBIfam" id="NF008315">
    <property type="entry name" value="PRK11103.1"/>
    <property type="match status" value="1"/>
</dbReference>
<dbReference type="PANTHER" id="PTHR32502">
    <property type="entry name" value="N-ACETYLGALACTOSAMINE PERMEASE II COMPONENT-RELATED"/>
    <property type="match status" value="1"/>
</dbReference>
<dbReference type="PANTHER" id="PTHR32502:SF5">
    <property type="entry name" value="N-ACETYLGALACTOSAMINE PERMEASE IID COMPONENT-RELATED"/>
    <property type="match status" value="1"/>
</dbReference>
<dbReference type="Pfam" id="PF03613">
    <property type="entry name" value="EIID-AGA"/>
    <property type="match status" value="1"/>
</dbReference>
<dbReference type="PROSITE" id="PS51108">
    <property type="entry name" value="PTS_EIID"/>
    <property type="match status" value="1"/>
</dbReference>
<organism>
    <name type="scientific">Escherichia coli O157:H7</name>
    <dbReference type="NCBI Taxonomy" id="83334"/>
    <lineage>
        <taxon>Bacteria</taxon>
        <taxon>Pseudomonadati</taxon>
        <taxon>Pseudomonadota</taxon>
        <taxon>Gammaproteobacteria</taxon>
        <taxon>Enterobacterales</taxon>
        <taxon>Enterobacteriaceae</taxon>
        <taxon>Escherichia</taxon>
    </lineage>
</organism>